<name>TBB4_ELEIN</name>
<accession>Q9ZPN7</accession>
<protein>
    <recommendedName>
        <fullName>Tubulin beta-4 chain</fullName>
    </recommendedName>
    <alternativeName>
        <fullName>Beta-4-tubulin</fullName>
    </alternativeName>
</protein>
<keyword id="KW-0963">Cytoplasm</keyword>
<keyword id="KW-0206">Cytoskeleton</keyword>
<keyword id="KW-0342">GTP-binding</keyword>
<keyword id="KW-0460">Magnesium</keyword>
<keyword id="KW-0479">Metal-binding</keyword>
<keyword id="KW-0493">Microtubule</keyword>
<keyword id="KW-0547">Nucleotide-binding</keyword>
<gene>
    <name type="primary">TUBB4</name>
    <name type="synonym">TUB4</name>
</gene>
<reference key="1">
    <citation type="journal article" date="1999" name="Plant Mol. Biol.">
        <title>Molecular characterization of four beta-tubulin genes from dinitroaniline susceptible and resistant biotypes of Eleusine indica.</title>
        <authorList>
            <person name="Yamamoto E."/>
            <person name="Baird W.V."/>
        </authorList>
    </citation>
    <scope>NUCLEOTIDE SEQUENCE [MRNA]</scope>
</reference>
<feature type="chain" id="PRO_0000048345" description="Tubulin beta-4 chain">
    <location>
        <begin position="1"/>
        <end position="446"/>
    </location>
</feature>
<feature type="region of interest" description="Disordered" evidence="3">
    <location>
        <begin position="417"/>
        <end position="446"/>
    </location>
</feature>
<feature type="compositionally biased region" description="Polar residues" evidence="3">
    <location>
        <begin position="417"/>
        <end position="426"/>
    </location>
</feature>
<feature type="compositionally biased region" description="Acidic residues" evidence="3">
    <location>
        <begin position="429"/>
        <end position="446"/>
    </location>
</feature>
<feature type="binding site" evidence="2">
    <location>
        <position position="11"/>
    </location>
    <ligand>
        <name>GTP</name>
        <dbReference type="ChEBI" id="CHEBI:37565"/>
    </ligand>
</feature>
<feature type="binding site" evidence="1">
    <location>
        <position position="69"/>
    </location>
    <ligand>
        <name>GTP</name>
        <dbReference type="ChEBI" id="CHEBI:37565"/>
    </ligand>
</feature>
<feature type="binding site" evidence="1">
    <location>
        <position position="69"/>
    </location>
    <ligand>
        <name>Mg(2+)</name>
        <dbReference type="ChEBI" id="CHEBI:18420"/>
    </ligand>
</feature>
<feature type="binding site" evidence="2">
    <location>
        <position position="138"/>
    </location>
    <ligand>
        <name>GTP</name>
        <dbReference type="ChEBI" id="CHEBI:37565"/>
    </ligand>
</feature>
<feature type="binding site" evidence="2">
    <location>
        <position position="142"/>
    </location>
    <ligand>
        <name>GTP</name>
        <dbReference type="ChEBI" id="CHEBI:37565"/>
    </ligand>
</feature>
<feature type="binding site" evidence="2">
    <location>
        <position position="143"/>
    </location>
    <ligand>
        <name>GTP</name>
        <dbReference type="ChEBI" id="CHEBI:37565"/>
    </ligand>
</feature>
<feature type="binding site" evidence="2">
    <location>
        <position position="144"/>
    </location>
    <ligand>
        <name>GTP</name>
        <dbReference type="ChEBI" id="CHEBI:37565"/>
    </ligand>
</feature>
<feature type="binding site" evidence="2">
    <location>
        <position position="204"/>
    </location>
    <ligand>
        <name>GTP</name>
        <dbReference type="ChEBI" id="CHEBI:37565"/>
    </ligand>
</feature>
<feature type="binding site" evidence="2">
    <location>
        <position position="226"/>
    </location>
    <ligand>
        <name>GTP</name>
        <dbReference type="ChEBI" id="CHEBI:37565"/>
    </ligand>
</feature>
<dbReference type="EMBL" id="AF059290">
    <property type="protein sequence ID" value="AAD20181.1"/>
    <property type="molecule type" value="mRNA"/>
</dbReference>
<dbReference type="SMR" id="Q9ZPN7"/>
<dbReference type="GO" id="GO:0005737">
    <property type="term" value="C:cytoplasm"/>
    <property type="evidence" value="ECO:0007669"/>
    <property type="project" value="UniProtKB-KW"/>
</dbReference>
<dbReference type="GO" id="GO:0005874">
    <property type="term" value="C:microtubule"/>
    <property type="evidence" value="ECO:0007669"/>
    <property type="project" value="UniProtKB-KW"/>
</dbReference>
<dbReference type="GO" id="GO:0005525">
    <property type="term" value="F:GTP binding"/>
    <property type="evidence" value="ECO:0007669"/>
    <property type="project" value="UniProtKB-KW"/>
</dbReference>
<dbReference type="GO" id="GO:0003924">
    <property type="term" value="F:GTPase activity"/>
    <property type="evidence" value="ECO:0007669"/>
    <property type="project" value="InterPro"/>
</dbReference>
<dbReference type="GO" id="GO:0046872">
    <property type="term" value="F:metal ion binding"/>
    <property type="evidence" value="ECO:0007669"/>
    <property type="project" value="UniProtKB-KW"/>
</dbReference>
<dbReference type="GO" id="GO:0005200">
    <property type="term" value="F:structural constituent of cytoskeleton"/>
    <property type="evidence" value="ECO:0007669"/>
    <property type="project" value="InterPro"/>
</dbReference>
<dbReference type="GO" id="GO:0007017">
    <property type="term" value="P:microtubule-based process"/>
    <property type="evidence" value="ECO:0007669"/>
    <property type="project" value="InterPro"/>
</dbReference>
<dbReference type="CDD" id="cd02187">
    <property type="entry name" value="beta_tubulin"/>
    <property type="match status" value="1"/>
</dbReference>
<dbReference type="FunFam" id="1.10.287.600:FF:000002">
    <property type="entry name" value="Tubulin beta chain"/>
    <property type="match status" value="1"/>
</dbReference>
<dbReference type="FunFam" id="3.30.1330.20:FF:000002">
    <property type="entry name" value="Tubulin beta chain"/>
    <property type="match status" value="1"/>
</dbReference>
<dbReference type="FunFam" id="3.40.50.1440:FF:000005">
    <property type="entry name" value="Tubulin beta chain"/>
    <property type="match status" value="1"/>
</dbReference>
<dbReference type="Gene3D" id="1.10.287.600">
    <property type="entry name" value="Helix hairpin bin"/>
    <property type="match status" value="1"/>
</dbReference>
<dbReference type="Gene3D" id="3.30.1330.20">
    <property type="entry name" value="Tubulin/FtsZ, C-terminal domain"/>
    <property type="match status" value="1"/>
</dbReference>
<dbReference type="Gene3D" id="3.40.50.1440">
    <property type="entry name" value="Tubulin/FtsZ, GTPase domain"/>
    <property type="match status" value="1"/>
</dbReference>
<dbReference type="InterPro" id="IPR013838">
    <property type="entry name" value="Beta-tubulin_BS"/>
</dbReference>
<dbReference type="InterPro" id="IPR002453">
    <property type="entry name" value="Beta_tubulin"/>
</dbReference>
<dbReference type="InterPro" id="IPR008280">
    <property type="entry name" value="Tub_FtsZ_C"/>
</dbReference>
<dbReference type="InterPro" id="IPR000217">
    <property type="entry name" value="Tubulin"/>
</dbReference>
<dbReference type="InterPro" id="IPR037103">
    <property type="entry name" value="Tubulin/FtsZ-like_C"/>
</dbReference>
<dbReference type="InterPro" id="IPR018316">
    <property type="entry name" value="Tubulin/FtsZ_2-layer-sand-dom"/>
</dbReference>
<dbReference type="InterPro" id="IPR036525">
    <property type="entry name" value="Tubulin/FtsZ_GTPase_sf"/>
</dbReference>
<dbReference type="InterPro" id="IPR023123">
    <property type="entry name" value="Tubulin_C"/>
</dbReference>
<dbReference type="InterPro" id="IPR017975">
    <property type="entry name" value="Tubulin_CS"/>
</dbReference>
<dbReference type="InterPro" id="IPR003008">
    <property type="entry name" value="Tubulin_FtsZ_GTPase"/>
</dbReference>
<dbReference type="PANTHER" id="PTHR11588">
    <property type="entry name" value="TUBULIN"/>
    <property type="match status" value="1"/>
</dbReference>
<dbReference type="Pfam" id="PF00091">
    <property type="entry name" value="Tubulin"/>
    <property type="match status" value="1"/>
</dbReference>
<dbReference type="Pfam" id="PF03953">
    <property type="entry name" value="Tubulin_C"/>
    <property type="match status" value="1"/>
</dbReference>
<dbReference type="PRINTS" id="PR01163">
    <property type="entry name" value="BETATUBULIN"/>
</dbReference>
<dbReference type="PRINTS" id="PR01161">
    <property type="entry name" value="TUBULIN"/>
</dbReference>
<dbReference type="SMART" id="SM00864">
    <property type="entry name" value="Tubulin"/>
    <property type="match status" value="1"/>
</dbReference>
<dbReference type="SMART" id="SM00865">
    <property type="entry name" value="Tubulin_C"/>
    <property type="match status" value="1"/>
</dbReference>
<dbReference type="SUPFAM" id="SSF55307">
    <property type="entry name" value="Tubulin C-terminal domain-like"/>
    <property type="match status" value="1"/>
</dbReference>
<dbReference type="SUPFAM" id="SSF52490">
    <property type="entry name" value="Tubulin nucleotide-binding domain-like"/>
    <property type="match status" value="1"/>
</dbReference>
<dbReference type="PROSITE" id="PS00227">
    <property type="entry name" value="TUBULIN"/>
    <property type="match status" value="1"/>
</dbReference>
<dbReference type="PROSITE" id="PS00228">
    <property type="entry name" value="TUBULIN_B_AUTOREG"/>
    <property type="match status" value="1"/>
</dbReference>
<sequence length="446" mass="50139">MREILHIQGGQCGNQIGSKFWEVVCDEHGIDPTGRYVGTSDLQLERVNVYYNEASCGRFVPRAVLMDLEPGTMDSVRTGPYGQIFRPDNFVFGQSGAGNNWAKGHYTEGAELIDSVLDVVRKEAENCDCLQGFQVCHSLGGGTGSGMGTLLISKIREEYPDRMMLTFSVFPSPKVSDTVVEPYNATLSVHQLVENADECMVLDNEALYDICFRTLKLTTPSFGDLNHLISATMSGVTCCLRFPGQLNSDLRKLAVNLIPFPRLHFFMVGFAPLTSRGSQQYRALTVPELTQQMWDAKNMMCAADPRHGRYLTASAMFRGKMSTKEVDEQMINVQNKNSSYFVEWIPNNVKSSVCDIPPRGLSMASTFIGNSTSIQEMFRRVSEQFTAMFRRKAFLHWYTGEGMDEMEFTEAESNMNDLVSEYQQYQDATADEEGDYEDEDEALHDE</sequence>
<evidence type="ECO:0000250" key="1">
    <source>
        <dbReference type="UniProtKB" id="P68363"/>
    </source>
</evidence>
<evidence type="ECO:0000250" key="2">
    <source>
        <dbReference type="UniProtKB" id="Q13509"/>
    </source>
</evidence>
<evidence type="ECO:0000256" key="3">
    <source>
        <dbReference type="SAM" id="MobiDB-lite"/>
    </source>
</evidence>
<evidence type="ECO:0000305" key="4"/>
<proteinExistence type="evidence at transcript level"/>
<organism>
    <name type="scientific">Eleusine indica</name>
    <name type="common">Goosegrass</name>
    <name type="synonym">Cynosurus indicus</name>
    <dbReference type="NCBI Taxonomy" id="29674"/>
    <lineage>
        <taxon>Eukaryota</taxon>
        <taxon>Viridiplantae</taxon>
        <taxon>Streptophyta</taxon>
        <taxon>Embryophyta</taxon>
        <taxon>Tracheophyta</taxon>
        <taxon>Spermatophyta</taxon>
        <taxon>Magnoliopsida</taxon>
        <taxon>Liliopsida</taxon>
        <taxon>Poales</taxon>
        <taxon>Poaceae</taxon>
        <taxon>PACMAD clade</taxon>
        <taxon>Chloridoideae</taxon>
        <taxon>Cynodonteae</taxon>
        <taxon>Eleusininae</taxon>
        <taxon>Eleusine</taxon>
    </lineage>
</organism>
<comment type="function">
    <text>Tubulin is the major constituent of microtubules, a cylinder consisting of laterally associated linear protofilaments composed of alpha- and beta-tubulin heterodimers. Microtubules grow by the addition of GTP-tubulin dimers to the microtubule end, where a stabilizing cap forms. Below the cap, tubulin dimers are in GDP-bound state, owing to GTPase activity of alpha-tubulin.</text>
</comment>
<comment type="cofactor">
    <cofactor evidence="1">
        <name>Mg(2+)</name>
        <dbReference type="ChEBI" id="CHEBI:18420"/>
    </cofactor>
</comment>
<comment type="subunit">
    <text>Dimer of alpha and beta chains. A typical microtubule is a hollow water-filled tube with an outer diameter of 25 nm and an inner diameter of 15 nM. Alpha-beta heterodimers associate head-to-tail to form protofilaments running lengthwise along the microtubule wall with the beta-tubulin subunit facing the microtubule plus end conferring a structural polarity. Microtubules usually have 13 protofilaments but different protofilament numbers can be found in some organisms and specialized cells.</text>
</comment>
<comment type="subcellular location">
    <subcellularLocation>
        <location>Cytoplasm</location>
        <location>Cytoskeleton</location>
    </subcellularLocation>
</comment>
<comment type="similarity">
    <text evidence="4">Belongs to the tubulin family.</text>
</comment>